<organism>
    <name type="scientific">Rattus norvegicus</name>
    <name type="common">Rat</name>
    <dbReference type="NCBI Taxonomy" id="10116"/>
    <lineage>
        <taxon>Eukaryota</taxon>
        <taxon>Metazoa</taxon>
        <taxon>Chordata</taxon>
        <taxon>Craniata</taxon>
        <taxon>Vertebrata</taxon>
        <taxon>Euteleostomi</taxon>
        <taxon>Mammalia</taxon>
        <taxon>Eutheria</taxon>
        <taxon>Euarchontoglires</taxon>
        <taxon>Glires</taxon>
        <taxon>Rodentia</taxon>
        <taxon>Myomorpha</taxon>
        <taxon>Muroidea</taxon>
        <taxon>Muridae</taxon>
        <taxon>Murinae</taxon>
        <taxon>Rattus</taxon>
    </lineage>
</organism>
<gene>
    <name type="primary">Gnat3</name>
    <name type="synonym">Gnat-3</name>
</gene>
<evidence type="ECO:0000250" key="1"/>
<evidence type="ECO:0000250" key="2">
    <source>
        <dbReference type="UniProtKB" id="A8MTJ3"/>
    </source>
</evidence>
<evidence type="ECO:0000250" key="3">
    <source>
        <dbReference type="UniProtKB" id="Q3V3I2"/>
    </source>
</evidence>
<evidence type="ECO:0000255" key="4">
    <source>
        <dbReference type="PROSITE-ProRule" id="PRU01230"/>
    </source>
</evidence>
<evidence type="ECO:0000256" key="5">
    <source>
        <dbReference type="SAM" id="MobiDB-lite"/>
    </source>
</evidence>
<evidence type="ECO:0000269" key="6">
    <source>
    </source>
</evidence>
<evidence type="ECO:0000269" key="7">
    <source>
    </source>
</evidence>
<evidence type="ECO:0000269" key="8">
    <source>
    </source>
</evidence>
<evidence type="ECO:0000269" key="9">
    <source>
    </source>
</evidence>
<evidence type="ECO:0000269" key="10">
    <source>
    </source>
</evidence>
<evidence type="ECO:0000269" key="11">
    <source>
    </source>
</evidence>
<evidence type="ECO:0000269" key="12">
    <source>
    </source>
</evidence>
<evidence type="ECO:0000269" key="13">
    <source>
    </source>
</evidence>
<evidence type="ECO:0000269" key="14">
    <source>
    </source>
</evidence>
<evidence type="ECO:0000269" key="15">
    <source>
    </source>
</evidence>
<evidence type="ECO:0000269" key="16">
    <source>
    </source>
</evidence>
<evidence type="ECO:0000269" key="17">
    <source>
    </source>
</evidence>
<evidence type="ECO:0000305" key="18"/>
<comment type="function">
    <text evidence="6 9 12 14 15">Guanine nucleotide-binding protein (G protein) alpha subunit playing a prominent role in bitter and sweet taste transduction as well as in umami (monosodium glutamate, monopotassium glutamate, and inosine monophosphate) taste transduction. Transduction by this alpha subunit involves coupling of specific cell-surface receptors with a cGMP-phosphodiesterase; Activation of phosphodiesterase lowers intracellular levels of cAMP and cGMP which may open a cyclic nucleotide-suppressible cation channel leading to influx of calcium, ultimately leading to release of neurotransmitter. Indeed, denatonium and strychnine induce transient reduction in cAMP and cGMP in taste tissue, whereas this decrease is inhibited by GNAT3 antibody. Gustducin heterotrimer transduces response to bitter and sweet compounds via regulation of phosphodiesterase for alpha subunit, as well as via activation of phospholipase C for beta and gamma subunits, with ultimate increase inositol trisphosphate and increase of intracellular Calcium. GNAT3 can functionally couple to taste receptors to transmit intracellular signal: receptor heterodimer TAS1R2/TAS1R3 senses sweetness and TAS1R1/TAS1R3 transduces umami taste, whereas the T2R family GPCRs act as bitter sensors. Also functions as lumenal sugar sensors in the gut to control the expression of the Na+-glucose transporter SGLT1 in response to dietaty sugar, as well as the secretion of Glucagon-like peptide-1, GLP-1 and glucose-dependent insulinotropic polypeptide, GIP. Thus, may modulate the gut capacity to absorb sugars, with implications for the prevention and treatment of malabsorption syndromes and diet-related disorders including diabetes and obesity.</text>
</comment>
<comment type="subunit">
    <text evidence="2 3">G proteins are composed of 3 units; alpha, beta and gamma, respectively GNAT3, GNB1 and GNG13 for Gustducin heterotrimer for bitter taste transduction (By similarity). The alpha chain contains the guanine nucleotide binding site (By similarity). Component of the TAS2R14-GNAT3 complex, consisting of TAS2R14, GNAT3, GNB1 and GNG2; within the complex interacts with TAS2R14; this complex plays a role in the perception of bitterness (By similarity). Gustducin heterotrimer may also be composed of GNAT3, GNB3 and GNG13 (By similarity).</text>
</comment>
<comment type="subcellular location">
    <subcellularLocation>
        <location evidence="8">Cytoplasm</location>
    </subcellularLocation>
    <text>Associated with microvilli, the presumed sites of sensory transduction in taste cells.</text>
</comment>
<comment type="tissue specificity">
    <text evidence="10 11 12 13 16 17">Expressed in taste buds (sensory organs of clustered epithelial cells) of the circumvallate, foliate and fungiform papillae of the tongue, as well as in nasoincisor, palatal and epiglottal taste buds at protein level. Expressed in enteroendocrine of the gut, in the lumenal pole of a subset of brush cells lining the stomach and the intestine at protein level. Detected in solitary cells throughout the respiratory track. Expressed also in spermatozoa.</text>
</comment>
<comment type="developmental stage">
    <text evidence="7">Expressed in scattered solitary ovoid or bipolar cells among the oral epithelium from day 1-7, but with higher frequency in the soft palate as compared with the nasoincisor, circumvallate, and foliate papillae at day 1. During the second week, the solitary cells could no longer be recognized while cells expressing GNAT3 within the taste buds gradually increased. The onset of taste transduction accomplished by the palatal taste buds developed earlier than that achieved by taste buds in the circumvallate and foliate papillae.</text>
</comment>
<comment type="induction">
    <text evidence="14">By bitter compounds denatonium and quinine.</text>
</comment>
<comment type="PTM">
    <text>Potential N-myristoylation may anchor alpha-subunit to the inner surface of plasma membrane.</text>
</comment>
<comment type="miscellaneous">
    <text>Transgenic expression of GNAT3 restores responsiveness of GNAT3 deficient mice to both bitter and sweet compounds, whereas expression of mutated Gly-352 transgene do not. Furthermore, in wild-type mice, this mutated transgene acts as a dominant-negative by inhibition of endogenous GNAT3 interactions with taste receptors.</text>
</comment>
<comment type="similarity">
    <text evidence="18">Belongs to the G-alpha family. G(i/o/t/z) subfamily.</text>
</comment>
<feature type="initiator methionine" description="Removed">
    <location>
        <position position="1"/>
    </location>
</feature>
<feature type="chain" id="PRO_0000203743" description="Guanine nucleotide-binding protein G(t) subunit alpha-3">
    <location>
        <begin position="2"/>
        <end position="354"/>
    </location>
</feature>
<feature type="domain" description="G-alpha" evidence="4">
    <location>
        <begin position="32"/>
        <end position="354"/>
    </location>
</feature>
<feature type="region of interest" description="Disordered" evidence="5">
    <location>
        <begin position="1"/>
        <end position="27"/>
    </location>
</feature>
<feature type="region of interest" description="G1 motif" evidence="4">
    <location>
        <begin position="35"/>
        <end position="48"/>
    </location>
</feature>
<feature type="region of interest" description="G2 motif" evidence="4">
    <location>
        <begin position="173"/>
        <end position="181"/>
    </location>
</feature>
<feature type="region of interest" description="G3 motif" evidence="4">
    <location>
        <begin position="196"/>
        <end position="205"/>
    </location>
</feature>
<feature type="region of interest" description="G4 motif" evidence="4">
    <location>
        <begin position="265"/>
        <end position="272"/>
    </location>
</feature>
<feature type="region of interest" description="G5 motif" evidence="4">
    <location>
        <begin position="324"/>
        <end position="329"/>
    </location>
</feature>
<feature type="compositionally biased region" description="Basic and acidic residues" evidence="5">
    <location>
        <begin position="8"/>
        <end position="27"/>
    </location>
</feature>
<feature type="binding site" evidence="1">
    <location>
        <begin position="40"/>
        <end position="47"/>
    </location>
    <ligand>
        <name>GTP</name>
        <dbReference type="ChEBI" id="CHEBI:37565"/>
    </ligand>
</feature>
<feature type="binding site" evidence="1">
    <location>
        <position position="47"/>
    </location>
    <ligand>
        <name>Mg(2+)</name>
        <dbReference type="ChEBI" id="CHEBI:18420"/>
    </ligand>
</feature>
<feature type="binding site" evidence="1">
    <location>
        <begin position="175"/>
        <end position="181"/>
    </location>
    <ligand>
        <name>GTP</name>
        <dbReference type="ChEBI" id="CHEBI:37565"/>
    </ligand>
</feature>
<feature type="binding site" evidence="1">
    <location>
        <position position="181"/>
    </location>
    <ligand>
        <name>Mg(2+)</name>
        <dbReference type="ChEBI" id="CHEBI:18420"/>
    </ligand>
</feature>
<feature type="binding site" evidence="1">
    <location>
        <begin position="200"/>
        <end position="204"/>
    </location>
    <ligand>
        <name>GTP</name>
        <dbReference type="ChEBI" id="CHEBI:37565"/>
    </ligand>
</feature>
<feature type="binding site" evidence="1">
    <location>
        <begin position="269"/>
        <end position="272"/>
    </location>
    <ligand>
        <name>GTP</name>
        <dbReference type="ChEBI" id="CHEBI:37565"/>
    </ligand>
</feature>
<feature type="binding site" evidence="1">
    <location>
        <position position="326"/>
    </location>
    <ligand>
        <name>GTP</name>
        <dbReference type="ChEBI" id="CHEBI:37565"/>
    </ligand>
</feature>
<feature type="lipid moiety-binding region" description="N-myristoyl glycine" evidence="1">
    <location>
        <position position="2"/>
    </location>
</feature>
<feature type="mutagenesis site" description="Loss of activation by both bitter and sweet compounds due to disruption of interaction with taste receptors." evidence="9">
    <original>G</original>
    <variation>P</variation>
    <location>
        <position position="352"/>
    </location>
</feature>
<accession>P29348</accession>
<sequence length="354" mass="40294">MGSGISSESKESAKRSKELEKKLQEDAERDARTVKLLLLGAGESGKSTIVKQMKIIHKNGYSKQECMEFKAVVYSNTLQSILAIVKAMTTLGIDYVNPRSREDQQLLLSMANTLEDGDMTPQLAEIIKRLWGDPGIQACFERASEYQLNDSAAYYLNDLDRLTAPGYVPNEQDVLHSRVKTTGIIETQFSFKDLNFRMFDVGGQRSERKKWIHCFEGVTCIIFCAALSAYDMVLVEDEEVNRMHESLHLFNSICNHKYFATTSIVLFLNKKDLFQEKVTKVHLSICFPEYTGPNTFEDAGNYIKNQFLDLNLKKEDKEIYSHMTCATDTQNVKFVFDAVTDIIIKENLKDCGLF</sequence>
<proteinExistence type="evidence at protein level"/>
<name>GNAT3_RAT</name>
<dbReference type="EMBL" id="X65747">
    <property type="protein sequence ID" value="CAA46650.1"/>
    <property type="molecule type" value="mRNA"/>
</dbReference>
<dbReference type="PIR" id="S24352">
    <property type="entry name" value="S24352"/>
</dbReference>
<dbReference type="RefSeq" id="NP_775162.1">
    <property type="nucleotide sequence ID" value="NM_173139.2"/>
</dbReference>
<dbReference type="SMR" id="P29348"/>
<dbReference type="FunCoup" id="P29348">
    <property type="interactions" value="231"/>
</dbReference>
<dbReference type="STRING" id="10116.ENSRNOP00000007032"/>
<dbReference type="iPTMnet" id="P29348"/>
<dbReference type="PhosphoSitePlus" id="P29348"/>
<dbReference type="jPOST" id="P29348"/>
<dbReference type="PaxDb" id="10116-ENSRNOP00000007032"/>
<dbReference type="Ensembl" id="ENSRNOT00000007032.7">
    <property type="protein sequence ID" value="ENSRNOP00000007032.6"/>
    <property type="gene ID" value="ENSRNOG00000005268.7"/>
</dbReference>
<dbReference type="GeneID" id="286924"/>
<dbReference type="KEGG" id="rno:286924"/>
<dbReference type="AGR" id="RGD:727817"/>
<dbReference type="CTD" id="346562"/>
<dbReference type="RGD" id="727817">
    <property type="gene designation" value="Gnat3"/>
</dbReference>
<dbReference type="eggNOG" id="KOG0082">
    <property type="taxonomic scope" value="Eukaryota"/>
</dbReference>
<dbReference type="GeneTree" id="ENSGT00940000161422"/>
<dbReference type="HOGENOM" id="CLU_014184_6_0_1"/>
<dbReference type="InParanoid" id="P29348"/>
<dbReference type="OMA" id="EDQRQLC"/>
<dbReference type="OrthoDB" id="5817230at2759"/>
<dbReference type="PhylomeDB" id="P29348"/>
<dbReference type="Reactome" id="R-RNO-170670">
    <property type="pathway name" value="Adenylate cyclase inhibitory pathway"/>
</dbReference>
<dbReference type="Reactome" id="R-RNO-392170">
    <property type="pathway name" value="ADP signalling through P2Y purinoceptor 12"/>
</dbReference>
<dbReference type="Reactome" id="R-RNO-418594">
    <property type="pathway name" value="G alpha (i) signalling events"/>
</dbReference>
<dbReference type="Reactome" id="R-RNO-9009391">
    <property type="pathway name" value="Extra-nuclear estrogen signaling"/>
</dbReference>
<dbReference type="Reactome" id="R-RNO-9717207">
    <property type="pathway name" value="Sensory perception of sweet, bitter, and umami (glutamate) taste"/>
</dbReference>
<dbReference type="PRO" id="PR:P29348"/>
<dbReference type="Proteomes" id="UP000002494">
    <property type="component" value="Chromosome 4"/>
</dbReference>
<dbReference type="Bgee" id="ENSRNOG00000005268">
    <property type="expression patterns" value="Expressed in jejunum and 8 other cell types or tissues"/>
</dbReference>
<dbReference type="GO" id="GO:0001669">
    <property type="term" value="C:acrosomal vesicle"/>
    <property type="evidence" value="ECO:0000314"/>
    <property type="project" value="RGD"/>
</dbReference>
<dbReference type="GO" id="GO:0016324">
    <property type="term" value="C:apical plasma membrane"/>
    <property type="evidence" value="ECO:0000314"/>
    <property type="project" value="RGD"/>
</dbReference>
<dbReference type="GO" id="GO:0005930">
    <property type="term" value="C:axoneme"/>
    <property type="evidence" value="ECO:0000314"/>
    <property type="project" value="RGD"/>
</dbReference>
<dbReference type="GO" id="GO:0005737">
    <property type="term" value="C:cytoplasm"/>
    <property type="evidence" value="ECO:0000266"/>
    <property type="project" value="RGD"/>
</dbReference>
<dbReference type="GO" id="GO:0005834">
    <property type="term" value="C:heterotrimeric G-protein complex"/>
    <property type="evidence" value="ECO:0000266"/>
    <property type="project" value="RGD"/>
</dbReference>
<dbReference type="GO" id="GO:0005886">
    <property type="term" value="C:plasma membrane"/>
    <property type="evidence" value="ECO:0000304"/>
    <property type="project" value="Reactome"/>
</dbReference>
<dbReference type="GO" id="GO:0032991">
    <property type="term" value="C:protein-containing complex"/>
    <property type="evidence" value="ECO:0000266"/>
    <property type="project" value="RGD"/>
</dbReference>
<dbReference type="GO" id="GO:0001664">
    <property type="term" value="F:G protein-coupled receptor binding"/>
    <property type="evidence" value="ECO:0000318"/>
    <property type="project" value="GO_Central"/>
</dbReference>
<dbReference type="GO" id="GO:0031683">
    <property type="term" value="F:G-protein beta/gamma-subunit complex binding"/>
    <property type="evidence" value="ECO:0000318"/>
    <property type="project" value="GO_Central"/>
</dbReference>
<dbReference type="GO" id="GO:0005525">
    <property type="term" value="F:GTP binding"/>
    <property type="evidence" value="ECO:0000314"/>
    <property type="project" value="RGD"/>
</dbReference>
<dbReference type="GO" id="GO:0003924">
    <property type="term" value="F:GTPase activity"/>
    <property type="evidence" value="ECO:0000314"/>
    <property type="project" value="RGD"/>
</dbReference>
<dbReference type="GO" id="GO:0046872">
    <property type="term" value="F:metal ion binding"/>
    <property type="evidence" value="ECO:0007669"/>
    <property type="project" value="UniProtKB-KW"/>
</dbReference>
<dbReference type="GO" id="GO:0007188">
    <property type="term" value="P:adenylate cyclase-modulating G protein-coupled receptor signaling pathway"/>
    <property type="evidence" value="ECO:0000318"/>
    <property type="project" value="GO_Central"/>
</dbReference>
<dbReference type="GO" id="GO:0050908">
    <property type="term" value="P:detection of light stimulus involved in visual perception"/>
    <property type="evidence" value="ECO:0000318"/>
    <property type="project" value="GO_Central"/>
</dbReference>
<dbReference type="GO" id="GO:0007186">
    <property type="term" value="P:G protein-coupled receptor signaling pathway"/>
    <property type="evidence" value="ECO:0000266"/>
    <property type="project" value="RGD"/>
</dbReference>
<dbReference type="GO" id="GO:0007603">
    <property type="term" value="P:phototransduction, visible light"/>
    <property type="evidence" value="ECO:0000318"/>
    <property type="project" value="GO_Central"/>
</dbReference>
<dbReference type="GO" id="GO:0035094">
    <property type="term" value="P:response to nicotine"/>
    <property type="evidence" value="ECO:0000270"/>
    <property type="project" value="RGD"/>
</dbReference>
<dbReference type="GO" id="GO:0050913">
    <property type="term" value="P:sensory perception of bitter taste"/>
    <property type="evidence" value="ECO:0000266"/>
    <property type="project" value="RGD"/>
</dbReference>
<dbReference type="GO" id="GO:0050916">
    <property type="term" value="P:sensory perception of sweet taste"/>
    <property type="evidence" value="ECO:0000266"/>
    <property type="project" value="RGD"/>
</dbReference>
<dbReference type="GO" id="GO:0050909">
    <property type="term" value="P:sensory perception of taste"/>
    <property type="evidence" value="ECO:0000266"/>
    <property type="project" value="RGD"/>
</dbReference>
<dbReference type="GO" id="GO:0050917">
    <property type="term" value="P:sensory perception of umami taste"/>
    <property type="evidence" value="ECO:0000266"/>
    <property type="project" value="RGD"/>
</dbReference>
<dbReference type="CDD" id="cd00066">
    <property type="entry name" value="G-alpha"/>
    <property type="match status" value="1"/>
</dbReference>
<dbReference type="FunFam" id="1.10.400.10:FF:000001">
    <property type="entry name" value="Guanine nucleotide-binding protein G(I) subunit alpha"/>
    <property type="match status" value="1"/>
</dbReference>
<dbReference type="FunFam" id="3.40.50.300:FF:000720">
    <property type="entry name" value="Guanine nucleotide-binding protein G(k) subunit alpha"/>
    <property type="match status" value="1"/>
</dbReference>
<dbReference type="FunFam" id="3.40.50.300:FF:000256">
    <property type="entry name" value="Guanine nucleotide-binding protein G(t) subunit alpha"/>
    <property type="match status" value="1"/>
</dbReference>
<dbReference type="Gene3D" id="1.10.400.10">
    <property type="entry name" value="GI Alpha 1, domain 2-like"/>
    <property type="match status" value="1"/>
</dbReference>
<dbReference type="Gene3D" id="3.40.50.300">
    <property type="entry name" value="P-loop containing nucleotide triphosphate hydrolases"/>
    <property type="match status" value="1"/>
</dbReference>
<dbReference type="InterPro" id="IPR001408">
    <property type="entry name" value="Gprotein_alpha_I"/>
</dbReference>
<dbReference type="InterPro" id="IPR001019">
    <property type="entry name" value="Gprotein_alpha_su"/>
</dbReference>
<dbReference type="InterPro" id="IPR011025">
    <property type="entry name" value="GproteinA_insert"/>
</dbReference>
<dbReference type="InterPro" id="IPR027417">
    <property type="entry name" value="P-loop_NTPase"/>
</dbReference>
<dbReference type="PANTHER" id="PTHR10218">
    <property type="entry name" value="GTP-BINDING PROTEIN ALPHA SUBUNIT"/>
    <property type="match status" value="1"/>
</dbReference>
<dbReference type="PANTHER" id="PTHR10218:SF66">
    <property type="entry name" value="GUANINE NUCLEOTIDE-BINDING PROTEIN G(T) SUBUNIT ALPHA-3"/>
    <property type="match status" value="1"/>
</dbReference>
<dbReference type="Pfam" id="PF00503">
    <property type="entry name" value="G-alpha"/>
    <property type="match status" value="1"/>
</dbReference>
<dbReference type="PRINTS" id="PR00318">
    <property type="entry name" value="GPROTEINA"/>
</dbReference>
<dbReference type="PRINTS" id="PR00441">
    <property type="entry name" value="GPROTEINAI"/>
</dbReference>
<dbReference type="SMART" id="SM00275">
    <property type="entry name" value="G_alpha"/>
    <property type="match status" value="1"/>
</dbReference>
<dbReference type="SUPFAM" id="SSF52540">
    <property type="entry name" value="P-loop containing nucleoside triphosphate hydrolases"/>
    <property type="match status" value="1"/>
</dbReference>
<dbReference type="SUPFAM" id="SSF47895">
    <property type="entry name" value="Transducin (alpha subunit), insertion domain"/>
    <property type="match status" value="1"/>
</dbReference>
<dbReference type="PROSITE" id="PS51882">
    <property type="entry name" value="G_ALPHA"/>
    <property type="match status" value="1"/>
</dbReference>
<keyword id="KW-0963">Cytoplasm</keyword>
<keyword id="KW-0342">GTP-binding</keyword>
<keyword id="KW-0449">Lipoprotein</keyword>
<keyword id="KW-0460">Magnesium</keyword>
<keyword id="KW-0479">Metal-binding</keyword>
<keyword id="KW-0519">Myristate</keyword>
<keyword id="KW-0547">Nucleotide-binding</keyword>
<keyword id="KW-1185">Reference proteome</keyword>
<keyword id="KW-0716">Sensory transduction</keyword>
<keyword id="KW-0919">Taste</keyword>
<keyword id="KW-0807">Transducer</keyword>
<keyword id="KW-0844">Vision</keyword>
<protein>
    <recommendedName>
        <fullName>Guanine nucleotide-binding protein G(t) subunit alpha-3</fullName>
    </recommendedName>
    <alternativeName>
        <fullName>Gustducin alpha-3 chain</fullName>
    </alternativeName>
</protein>
<reference key="1">
    <citation type="journal article" date="1992" name="Nature">
        <title>Gustducin is a taste-cell-specific G protein closely related to the transducins.</title>
        <authorList>
            <person name="McLaughlin S.K."/>
            <person name="McKinnon P.J."/>
            <person name="Margolskee R.F."/>
        </authorList>
    </citation>
    <scope>NUCLEOTIDE SEQUENCE [MRNA]</scope>
    <scope>FUNCTION</scope>
    <scope>TISSUE SPECIFICITY</scope>
    <source>
        <strain>Sprague-Dawley</strain>
        <tissue>Tongue</tissue>
    </source>
</reference>
<reference key="2">
    <citation type="journal article" date="1995" name="Biochem. J.">
        <title>Functional expression of the taste specific G-protein, alpha-gustducin.</title>
        <authorList>
            <person name="Hoon M.A."/>
            <person name="Northup J.K."/>
            <person name="Margolskee R.F."/>
            <person name="Ryba N.J.P."/>
        </authorList>
    </citation>
    <scope>FUNCTION</scope>
</reference>
<reference key="3">
    <citation type="journal article" date="1995" name="Nature">
        <title>Coupling of bitter receptor to phosphodiesterase through transducin in taste receptor cells.</title>
        <authorList>
            <person name="Ruiz-Avila L."/>
            <person name="McLaughlin S.K."/>
            <person name="Wildman D."/>
            <person name="McKinnon P.J."/>
            <person name="Robichon A."/>
            <person name="Spickofsky N."/>
            <person name="Margolskee R.F."/>
        </authorList>
    </citation>
    <scope>FUNCTION</scope>
    <scope>INDUCTION</scope>
</reference>
<reference key="4">
    <citation type="journal article" date="1996" name="Proc. Natl. Acad. Sci. U.S.A.">
        <title>Taste receptor-like cells in the rat gut identified by expression of alpha-gustducin.</title>
        <authorList>
            <person name="Hoefer D."/>
            <person name="Pueschel B."/>
            <person name="Drenckhahn D."/>
        </authorList>
    </citation>
    <scope>TISSUE SPECIFICITY</scope>
</reference>
<reference key="5">
    <citation type="journal article" date="1997" name="J. Neurosci.">
        <title>Differential expression of alpha-gustducin in taste bud populations of the rat and hamster.</title>
        <authorList>
            <person name="Boughter J.D. Jr."/>
            <person name="Pumplin D.W."/>
            <person name="Yu C."/>
            <person name="Christy R.C."/>
            <person name="Smith D.V."/>
        </authorList>
    </citation>
    <scope>TISSUE SPECIFICITY</scope>
</reference>
<reference key="6">
    <citation type="journal article" date="1999" name="Cell">
        <title>Putative mammalian taste receptors: a class of taste-specific GPCRs with distinct topographic selectivity.</title>
        <authorList>
            <person name="Hoon M.A."/>
            <person name="Adler E."/>
            <person name="Lindemeier J."/>
            <person name="Battey J.F."/>
            <person name="Ryba N.J.P."/>
            <person name="Zuker C.S."/>
        </authorList>
    </citation>
    <scope>FUNCTION</scope>
</reference>
<reference key="7">
    <citation type="journal article" date="1999" name="Chem. Senses">
        <title>Alpha-gustducin-immunoreactive solitary chemosensory cells in the developing chemoreceptorial epithelium of the rat vallate papilla.</title>
        <authorList>
            <person name="Sbarbati A."/>
            <person name="Crescimanno C."/>
            <person name="Bernardi P."/>
            <person name="Osculati F."/>
        </authorList>
    </citation>
    <scope>DEVELOPMENTAL STAGE</scope>
</reference>
<reference key="8">
    <citation type="journal article" date="1999" name="J. Neurosci.">
        <title>Directing gene expression to gustducin-positive taste receptor cells.</title>
        <authorList>
            <person name="Wong G.T."/>
            <person name="Ruiz-Avila L."/>
            <person name="Margolskee R.F."/>
        </authorList>
    </citation>
    <scope>TRANSGENE</scope>
</reference>
<reference key="9">
    <citation type="journal article" date="2000" name="J. Comp. Neurol.">
        <title>Ultrastructural localization of gustducin immunoreactivity in microvilli of type II taste cells in the rat.</title>
        <authorList>
            <person name="Yang R."/>
            <person name="Tabata S."/>
            <person name="Crowley H.H."/>
            <person name="Margolskee R.F."/>
            <person name="Kinnamon J.C."/>
        </authorList>
    </citation>
    <scope>SUBCELLULAR LOCATION</scope>
</reference>
<reference key="10">
    <citation type="journal article" date="2001" name="Proc. Natl. Acad. Sci. U.S.A.">
        <title>Dominant loss of responsiveness to sweet and bitter compounds caused by a single mutation in alpha-gustducin.</title>
        <authorList>
            <person name="Ruiz-Avila L."/>
            <person name="Wong G.T."/>
            <person name="Damak S."/>
            <person name="Margolskee R.F."/>
        </authorList>
    </citation>
    <scope>FUNCTION</scope>
    <scope>MUTAGENESIS OF GLY-352</scope>
</reference>
<reference key="11">
    <citation type="journal article" date="2005" name="Cell Tissue Res.">
        <title>Alpha-gustducin immunoreactivity in the airways.</title>
        <authorList>
            <person name="Merigo F."/>
            <person name="Benati D."/>
            <person name="Tizzano M."/>
            <person name="Osculati F."/>
            <person name="Sbarbati A."/>
        </authorList>
    </citation>
    <scope>TISSUE SPECIFICITY</scope>
</reference>
<reference key="12">
    <citation type="journal article" date="2005" name="Neuroscience">
        <title>Co-expression patterns of the neuropeptides vasoactive intestinal peptide and cholecystokinin with the transduction molecules alpha-gustducin and T1R2 in rat taste receptor cells.</title>
        <authorList>
            <person name="Shen T."/>
            <person name="Kaya N."/>
            <person name="Zhao F.-L."/>
            <person name="Lu S.-G."/>
            <person name="Cao Y."/>
            <person name="Herness S."/>
        </authorList>
    </citation>
    <scope>TISSUE SPECIFICITY</scope>
</reference>
<reference key="13">
    <citation type="journal article" date="2007" name="J. Comp. Physiol. A">
        <title>Expression of the G-protein alpha-subunit gustducin in mammalian spermatozoa.</title>
        <authorList>
            <person name="Fehr J."/>
            <person name="Meyer D."/>
            <person name="Widmayer P."/>
            <person name="Borth H.C."/>
            <person name="Ackermann F."/>
            <person name="Wilhelm B."/>
            <person name="Gudermann T."/>
            <person name="Boekhoff I."/>
        </authorList>
    </citation>
    <scope>TISSUE SPECIFICITY</scope>
</reference>